<sequence length="216" mass="23419">MPMNEPVDLQPSPSLLPMSRRFRGYLPVVVDVETGGFDWNKHALLEIACVPIEMDAQGHFFPGETASAHLVPAPGLEIDPKSLEITGIVLDHPFRFAKQEKDALDHVFAPVRAAVKKYGCQRAILVGHNAHFDLNFLNAAVARVGHKRNPFHPFSVFDTVTLAGVAYGQTVLARAAQAAGLDWNSADAHSAVYDTEQTARLFCKIANAWPGPASAG</sequence>
<protein>
    <recommendedName>
        <fullName evidence="1">Ribonuclease T</fullName>
        <ecNumber evidence="1">3.1.13.-</ecNumber>
    </recommendedName>
    <alternativeName>
        <fullName evidence="1">Exoribonuclease T</fullName>
        <shortName evidence="1">RNase T</shortName>
    </alternativeName>
</protein>
<dbReference type="EC" id="3.1.13.-" evidence="1"/>
<dbReference type="EMBL" id="AE008922">
    <property type="protein sequence ID" value="AAM40816.1"/>
    <property type="molecule type" value="Genomic_DNA"/>
</dbReference>
<dbReference type="RefSeq" id="NP_636892.1">
    <property type="nucleotide sequence ID" value="NC_003902.1"/>
</dbReference>
<dbReference type="RefSeq" id="WP_011036706.1">
    <property type="nucleotide sequence ID" value="NC_003902.1"/>
</dbReference>
<dbReference type="SMR" id="Q8PAG3"/>
<dbReference type="STRING" id="190485.XCC1521"/>
<dbReference type="EnsemblBacteria" id="AAM40816">
    <property type="protein sequence ID" value="AAM40816"/>
    <property type="gene ID" value="XCC1521"/>
</dbReference>
<dbReference type="GeneID" id="58013888"/>
<dbReference type="KEGG" id="xcc:XCC1521"/>
<dbReference type="PATRIC" id="fig|190485.4.peg.1632"/>
<dbReference type="eggNOG" id="COG0847">
    <property type="taxonomic scope" value="Bacteria"/>
</dbReference>
<dbReference type="HOGENOM" id="CLU_082724_0_0_6"/>
<dbReference type="OrthoDB" id="9778264at2"/>
<dbReference type="Proteomes" id="UP000001010">
    <property type="component" value="Chromosome"/>
</dbReference>
<dbReference type="GO" id="GO:0005829">
    <property type="term" value="C:cytosol"/>
    <property type="evidence" value="ECO:0000318"/>
    <property type="project" value="GO_Central"/>
</dbReference>
<dbReference type="GO" id="GO:0008408">
    <property type="term" value="F:3'-5' exonuclease activity"/>
    <property type="evidence" value="ECO:0000318"/>
    <property type="project" value="GO_Central"/>
</dbReference>
<dbReference type="GO" id="GO:0000287">
    <property type="term" value="F:magnesium ion binding"/>
    <property type="evidence" value="ECO:0007669"/>
    <property type="project" value="UniProtKB-UniRule"/>
</dbReference>
<dbReference type="GO" id="GO:0003676">
    <property type="term" value="F:nucleic acid binding"/>
    <property type="evidence" value="ECO:0007669"/>
    <property type="project" value="InterPro"/>
</dbReference>
<dbReference type="GO" id="GO:0016896">
    <property type="term" value="F:RNA exonuclease activity, producing 5'-phosphomonoesters"/>
    <property type="evidence" value="ECO:0007669"/>
    <property type="project" value="UniProtKB-UniRule"/>
</dbReference>
<dbReference type="GO" id="GO:0045004">
    <property type="term" value="P:DNA replication proofreading"/>
    <property type="evidence" value="ECO:0000318"/>
    <property type="project" value="GO_Central"/>
</dbReference>
<dbReference type="GO" id="GO:0008033">
    <property type="term" value="P:tRNA processing"/>
    <property type="evidence" value="ECO:0007669"/>
    <property type="project" value="UniProtKB-KW"/>
</dbReference>
<dbReference type="CDD" id="cd06134">
    <property type="entry name" value="RNaseT"/>
    <property type="match status" value="1"/>
</dbReference>
<dbReference type="FunFam" id="3.30.420.10:FF:000009">
    <property type="entry name" value="Ribonuclease T"/>
    <property type="match status" value="1"/>
</dbReference>
<dbReference type="Gene3D" id="3.30.420.10">
    <property type="entry name" value="Ribonuclease H-like superfamily/Ribonuclease H"/>
    <property type="match status" value="1"/>
</dbReference>
<dbReference type="HAMAP" id="MF_00157">
    <property type="entry name" value="RNase_T"/>
    <property type="match status" value="1"/>
</dbReference>
<dbReference type="InterPro" id="IPR013520">
    <property type="entry name" value="Exonuclease_RNaseT/DNA_pol3"/>
</dbReference>
<dbReference type="InterPro" id="IPR005987">
    <property type="entry name" value="RNase_T"/>
</dbReference>
<dbReference type="InterPro" id="IPR012337">
    <property type="entry name" value="RNaseH-like_sf"/>
</dbReference>
<dbReference type="InterPro" id="IPR036397">
    <property type="entry name" value="RNaseH_sf"/>
</dbReference>
<dbReference type="NCBIfam" id="TIGR01298">
    <property type="entry name" value="RNaseT"/>
    <property type="match status" value="1"/>
</dbReference>
<dbReference type="PANTHER" id="PTHR30231">
    <property type="entry name" value="DNA POLYMERASE III SUBUNIT EPSILON"/>
    <property type="match status" value="1"/>
</dbReference>
<dbReference type="PANTHER" id="PTHR30231:SF2">
    <property type="entry name" value="RIBONUCLEASE T"/>
    <property type="match status" value="1"/>
</dbReference>
<dbReference type="Pfam" id="PF00929">
    <property type="entry name" value="RNase_T"/>
    <property type="match status" value="1"/>
</dbReference>
<dbReference type="SMART" id="SM00479">
    <property type="entry name" value="EXOIII"/>
    <property type="match status" value="1"/>
</dbReference>
<dbReference type="SUPFAM" id="SSF53098">
    <property type="entry name" value="Ribonuclease H-like"/>
    <property type="match status" value="1"/>
</dbReference>
<feature type="chain" id="PRO_0000208982" description="Ribonuclease T">
    <location>
        <begin position="1"/>
        <end position="216"/>
    </location>
</feature>
<feature type="domain" description="Exonuclease" evidence="1">
    <location>
        <begin position="28"/>
        <end position="202"/>
    </location>
</feature>
<feature type="active site" description="Proton donor/acceptor" evidence="1">
    <location>
        <position position="189"/>
    </location>
</feature>
<feature type="binding site" evidence="1">
    <location>
        <position position="31"/>
    </location>
    <ligand>
        <name>Mg(2+)</name>
        <dbReference type="ChEBI" id="CHEBI:18420"/>
        <label>1</label>
        <note>catalytic</note>
    </ligand>
</feature>
<feature type="binding site" evidence="1">
    <location>
        <position position="31"/>
    </location>
    <ligand>
        <name>Mg(2+)</name>
        <dbReference type="ChEBI" id="CHEBI:18420"/>
        <label>2</label>
        <note>catalytic</note>
    </ligand>
</feature>
<feature type="binding site" evidence="1">
    <location>
        <position position="33"/>
    </location>
    <ligand>
        <name>Mg(2+)</name>
        <dbReference type="ChEBI" id="CHEBI:18420"/>
        <label>2</label>
        <note>catalytic</note>
    </ligand>
</feature>
<feature type="binding site" evidence="1">
    <location>
        <position position="189"/>
    </location>
    <ligand>
        <name>Mg(2+)</name>
        <dbReference type="ChEBI" id="CHEBI:18420"/>
        <label>2</label>
        <note>catalytic</note>
    </ligand>
</feature>
<feature type="binding site" evidence="1">
    <location>
        <position position="194"/>
    </location>
    <ligand>
        <name>Mg(2+)</name>
        <dbReference type="ChEBI" id="CHEBI:18420"/>
        <label>2</label>
        <note>catalytic</note>
    </ligand>
</feature>
<feature type="site" description="Important for substrate binding and specificity" evidence="1">
    <location>
        <position position="37"/>
    </location>
</feature>
<feature type="site" description="Important for substrate binding and specificity" evidence="1">
    <location>
        <position position="132"/>
    </location>
</feature>
<feature type="site" description="Important for substrate binding and specificity" evidence="1">
    <location>
        <position position="154"/>
    </location>
</feature>
<proteinExistence type="inferred from homology"/>
<accession>Q8PAG3</accession>
<evidence type="ECO:0000255" key="1">
    <source>
        <dbReference type="HAMAP-Rule" id="MF_00157"/>
    </source>
</evidence>
<gene>
    <name evidence="1" type="primary">rnt</name>
    <name type="ordered locus">XCC1521</name>
</gene>
<comment type="function">
    <text evidence="1">Trims short 3' overhangs of a variety of RNA species, leaving a one or two nucleotide 3' overhang. Responsible for the end-turnover of tRNA: specifically removes the terminal AMP residue from uncharged tRNA (tRNA-C-C-A). Also appears to be involved in tRNA biosynthesis.</text>
</comment>
<comment type="cofactor">
    <cofactor evidence="1">
        <name>Mg(2+)</name>
        <dbReference type="ChEBI" id="CHEBI:18420"/>
    </cofactor>
    <text evidence="1">Binds two Mg(2+) per subunit. The active form of the enzyme binds two Mg(2+) ions in its active site. The first Mg(2+) forms only one salt bridge with the protein.</text>
</comment>
<comment type="subunit">
    <text evidence="1">Homodimer.</text>
</comment>
<comment type="similarity">
    <text evidence="1">Belongs to the RNase T family.</text>
</comment>
<organism>
    <name type="scientific">Xanthomonas campestris pv. campestris (strain ATCC 33913 / DSM 3586 / NCPPB 528 / LMG 568 / P 25)</name>
    <dbReference type="NCBI Taxonomy" id="190485"/>
    <lineage>
        <taxon>Bacteria</taxon>
        <taxon>Pseudomonadati</taxon>
        <taxon>Pseudomonadota</taxon>
        <taxon>Gammaproteobacteria</taxon>
        <taxon>Lysobacterales</taxon>
        <taxon>Lysobacteraceae</taxon>
        <taxon>Xanthomonas</taxon>
    </lineage>
</organism>
<reference key="1">
    <citation type="journal article" date="2002" name="Nature">
        <title>Comparison of the genomes of two Xanthomonas pathogens with differing host specificities.</title>
        <authorList>
            <person name="da Silva A.C.R."/>
            <person name="Ferro J.A."/>
            <person name="Reinach F.C."/>
            <person name="Farah C.S."/>
            <person name="Furlan L.R."/>
            <person name="Quaggio R.B."/>
            <person name="Monteiro-Vitorello C.B."/>
            <person name="Van Sluys M.A."/>
            <person name="Almeida N.F. Jr."/>
            <person name="Alves L.M.C."/>
            <person name="do Amaral A.M."/>
            <person name="Bertolini M.C."/>
            <person name="Camargo L.E.A."/>
            <person name="Camarotte G."/>
            <person name="Cannavan F."/>
            <person name="Cardozo J."/>
            <person name="Chambergo F."/>
            <person name="Ciapina L.P."/>
            <person name="Cicarelli R.M.B."/>
            <person name="Coutinho L.L."/>
            <person name="Cursino-Santos J.R."/>
            <person name="El-Dorry H."/>
            <person name="Faria J.B."/>
            <person name="Ferreira A.J.S."/>
            <person name="Ferreira R.C.C."/>
            <person name="Ferro M.I.T."/>
            <person name="Formighieri E.F."/>
            <person name="Franco M.C."/>
            <person name="Greggio C.C."/>
            <person name="Gruber A."/>
            <person name="Katsuyama A.M."/>
            <person name="Kishi L.T."/>
            <person name="Leite R.P."/>
            <person name="Lemos E.G.M."/>
            <person name="Lemos M.V.F."/>
            <person name="Locali E.C."/>
            <person name="Machado M.A."/>
            <person name="Madeira A.M.B.N."/>
            <person name="Martinez-Rossi N.M."/>
            <person name="Martins E.C."/>
            <person name="Meidanis J."/>
            <person name="Menck C.F.M."/>
            <person name="Miyaki C.Y."/>
            <person name="Moon D.H."/>
            <person name="Moreira L.M."/>
            <person name="Novo M.T.M."/>
            <person name="Okura V.K."/>
            <person name="Oliveira M.C."/>
            <person name="Oliveira V.R."/>
            <person name="Pereira H.A."/>
            <person name="Rossi A."/>
            <person name="Sena J.A.D."/>
            <person name="Silva C."/>
            <person name="de Souza R.F."/>
            <person name="Spinola L.A.F."/>
            <person name="Takita M.A."/>
            <person name="Tamura R.E."/>
            <person name="Teixeira E.C."/>
            <person name="Tezza R.I.D."/>
            <person name="Trindade dos Santos M."/>
            <person name="Truffi D."/>
            <person name="Tsai S.M."/>
            <person name="White F.F."/>
            <person name="Setubal J.C."/>
            <person name="Kitajima J.P."/>
        </authorList>
    </citation>
    <scope>NUCLEOTIDE SEQUENCE [LARGE SCALE GENOMIC DNA]</scope>
    <source>
        <strain>ATCC 33913 / DSM 3586 / NCPPB 528 / LMG 568 / P 25</strain>
    </source>
</reference>
<keyword id="KW-0269">Exonuclease</keyword>
<keyword id="KW-0378">Hydrolase</keyword>
<keyword id="KW-0460">Magnesium</keyword>
<keyword id="KW-0479">Metal-binding</keyword>
<keyword id="KW-0540">Nuclease</keyword>
<keyword id="KW-1185">Reference proteome</keyword>
<keyword id="KW-0819">tRNA processing</keyword>
<name>RNT_XANCP</name>